<keyword id="KW-0963">Cytoplasm</keyword>
<keyword id="KW-0275">Fatty acid biosynthesis</keyword>
<keyword id="KW-0276">Fatty acid metabolism</keyword>
<keyword id="KW-0444">Lipid biosynthesis</keyword>
<keyword id="KW-0443">Lipid metabolism</keyword>
<keyword id="KW-0596">Phosphopantetheine</keyword>
<keyword id="KW-0597">Phosphoprotein</keyword>
<keyword id="KW-1185">Reference proteome</keyword>
<evidence type="ECO:0000255" key="1">
    <source>
        <dbReference type="HAMAP-Rule" id="MF_01217"/>
    </source>
</evidence>
<evidence type="ECO:0000255" key="2">
    <source>
        <dbReference type="PROSITE-ProRule" id="PRU00258"/>
    </source>
</evidence>
<organism>
    <name type="scientific">Rhodopirellula baltica (strain DSM 10527 / NCIMB 13988 / SH1)</name>
    <dbReference type="NCBI Taxonomy" id="243090"/>
    <lineage>
        <taxon>Bacteria</taxon>
        <taxon>Pseudomonadati</taxon>
        <taxon>Planctomycetota</taxon>
        <taxon>Planctomycetia</taxon>
        <taxon>Pirellulales</taxon>
        <taxon>Pirellulaceae</taxon>
        <taxon>Rhodopirellula</taxon>
    </lineage>
</organism>
<dbReference type="EMBL" id="BX294133">
    <property type="protein sequence ID" value="CAD71509.1"/>
    <property type="molecule type" value="Genomic_DNA"/>
</dbReference>
<dbReference type="RefSeq" id="NP_863836.1">
    <property type="nucleotide sequence ID" value="NC_005027.1"/>
</dbReference>
<dbReference type="RefSeq" id="WP_007324899.1">
    <property type="nucleotide sequence ID" value="NC_005027.1"/>
</dbReference>
<dbReference type="SMR" id="Q7UYY2"/>
<dbReference type="FunCoup" id="Q7UYY2">
    <property type="interactions" value="506"/>
</dbReference>
<dbReference type="STRING" id="243090.RB318"/>
<dbReference type="EnsemblBacteria" id="CAD71509">
    <property type="protein sequence ID" value="CAD71509"/>
    <property type="gene ID" value="RB318"/>
</dbReference>
<dbReference type="KEGG" id="rba:RB318"/>
<dbReference type="PATRIC" id="fig|243090.15.peg.156"/>
<dbReference type="eggNOG" id="COG0236">
    <property type="taxonomic scope" value="Bacteria"/>
</dbReference>
<dbReference type="HOGENOM" id="CLU_108696_5_1_0"/>
<dbReference type="InParanoid" id="Q7UYY2"/>
<dbReference type="OrthoDB" id="9804551at2"/>
<dbReference type="UniPathway" id="UPA00094"/>
<dbReference type="Proteomes" id="UP000001025">
    <property type="component" value="Chromosome"/>
</dbReference>
<dbReference type="GO" id="GO:0005829">
    <property type="term" value="C:cytosol"/>
    <property type="evidence" value="ECO:0000318"/>
    <property type="project" value="GO_Central"/>
</dbReference>
<dbReference type="GO" id="GO:0016020">
    <property type="term" value="C:membrane"/>
    <property type="evidence" value="ECO:0007669"/>
    <property type="project" value="GOC"/>
</dbReference>
<dbReference type="GO" id="GO:0000035">
    <property type="term" value="F:acyl binding"/>
    <property type="evidence" value="ECO:0000318"/>
    <property type="project" value="GO_Central"/>
</dbReference>
<dbReference type="GO" id="GO:0000036">
    <property type="term" value="F:acyl carrier activity"/>
    <property type="evidence" value="ECO:0000318"/>
    <property type="project" value="GO_Central"/>
</dbReference>
<dbReference type="GO" id="GO:0009245">
    <property type="term" value="P:lipid A biosynthetic process"/>
    <property type="evidence" value="ECO:0000318"/>
    <property type="project" value="GO_Central"/>
</dbReference>
<dbReference type="FunFam" id="1.10.1200.10:FF:000001">
    <property type="entry name" value="Acyl carrier protein"/>
    <property type="match status" value="1"/>
</dbReference>
<dbReference type="Gene3D" id="1.10.1200.10">
    <property type="entry name" value="ACP-like"/>
    <property type="match status" value="1"/>
</dbReference>
<dbReference type="HAMAP" id="MF_01217">
    <property type="entry name" value="Acyl_carrier"/>
    <property type="match status" value="1"/>
</dbReference>
<dbReference type="InterPro" id="IPR003231">
    <property type="entry name" value="ACP"/>
</dbReference>
<dbReference type="InterPro" id="IPR036736">
    <property type="entry name" value="ACP-like_sf"/>
</dbReference>
<dbReference type="InterPro" id="IPR009081">
    <property type="entry name" value="PP-bd_ACP"/>
</dbReference>
<dbReference type="InterPro" id="IPR006162">
    <property type="entry name" value="Ppantetheine_attach_site"/>
</dbReference>
<dbReference type="NCBIfam" id="TIGR00517">
    <property type="entry name" value="acyl_carrier"/>
    <property type="match status" value="1"/>
</dbReference>
<dbReference type="NCBIfam" id="NF002148">
    <property type="entry name" value="PRK00982.1-2"/>
    <property type="match status" value="1"/>
</dbReference>
<dbReference type="NCBIfam" id="NF002149">
    <property type="entry name" value="PRK00982.1-3"/>
    <property type="match status" value="1"/>
</dbReference>
<dbReference type="NCBIfam" id="NF002150">
    <property type="entry name" value="PRK00982.1-4"/>
    <property type="match status" value="1"/>
</dbReference>
<dbReference type="NCBIfam" id="NF002151">
    <property type="entry name" value="PRK00982.1-5"/>
    <property type="match status" value="1"/>
</dbReference>
<dbReference type="PANTHER" id="PTHR20863">
    <property type="entry name" value="ACYL CARRIER PROTEIN"/>
    <property type="match status" value="1"/>
</dbReference>
<dbReference type="PANTHER" id="PTHR20863:SF76">
    <property type="entry name" value="CARRIER DOMAIN-CONTAINING PROTEIN"/>
    <property type="match status" value="1"/>
</dbReference>
<dbReference type="Pfam" id="PF00550">
    <property type="entry name" value="PP-binding"/>
    <property type="match status" value="1"/>
</dbReference>
<dbReference type="SUPFAM" id="SSF47336">
    <property type="entry name" value="ACP-like"/>
    <property type="match status" value="1"/>
</dbReference>
<dbReference type="PROSITE" id="PS50075">
    <property type="entry name" value="CARRIER"/>
    <property type="match status" value="1"/>
</dbReference>
<dbReference type="PROSITE" id="PS00012">
    <property type="entry name" value="PHOSPHOPANTETHEINE"/>
    <property type="match status" value="1"/>
</dbReference>
<name>ACP_RHOBA</name>
<feature type="chain" id="PRO_0000180177" description="Acyl carrier protein">
    <location>
        <begin position="1"/>
        <end position="81"/>
    </location>
</feature>
<feature type="domain" description="Carrier" evidence="2">
    <location>
        <begin position="2"/>
        <end position="77"/>
    </location>
</feature>
<feature type="modified residue" description="O-(pantetheine 4'-phosphoryl)serine" evidence="2">
    <location>
        <position position="37"/>
    </location>
</feature>
<protein>
    <recommendedName>
        <fullName evidence="1">Acyl carrier protein</fullName>
        <shortName evidence="1">ACP</shortName>
    </recommendedName>
</protein>
<proteinExistence type="inferred from homology"/>
<gene>
    <name evidence="1" type="primary">acpP</name>
    <name type="ordered locus">RB318</name>
</gene>
<reference key="1">
    <citation type="journal article" date="2003" name="Proc. Natl. Acad. Sci. U.S.A.">
        <title>Complete genome sequence of the marine planctomycete Pirellula sp. strain 1.</title>
        <authorList>
            <person name="Gloeckner F.O."/>
            <person name="Kube M."/>
            <person name="Bauer M."/>
            <person name="Teeling H."/>
            <person name="Lombardot T."/>
            <person name="Ludwig W."/>
            <person name="Gade D."/>
            <person name="Beck A."/>
            <person name="Borzym K."/>
            <person name="Heitmann K."/>
            <person name="Rabus R."/>
            <person name="Schlesner H."/>
            <person name="Amann R."/>
            <person name="Reinhardt R."/>
        </authorList>
    </citation>
    <scope>NUCLEOTIDE SEQUENCE [LARGE SCALE GENOMIC DNA]</scope>
    <source>
        <strain>DSM 10527 / NCIMB 13988 / SH1</strain>
    </source>
</reference>
<comment type="function">
    <text evidence="1">Carrier of the growing fatty acid chain in fatty acid biosynthesis.</text>
</comment>
<comment type="pathway">
    <text evidence="1">Lipid metabolism; fatty acid biosynthesis.</text>
</comment>
<comment type="subcellular location">
    <subcellularLocation>
        <location evidence="1">Cytoplasm</location>
    </subcellularLocation>
</comment>
<comment type="PTM">
    <text evidence="1">4'-phosphopantetheine is transferred from CoA to a specific serine of apo-ACP by AcpS. This modification is essential for activity because fatty acids are bound in thioester linkage to the sulfhydryl of the prosthetic group.</text>
</comment>
<comment type="similarity">
    <text evidence="1">Belongs to the acyl carrier protein (ACP) family.</text>
</comment>
<accession>Q7UYY2</accession>
<sequence>MASIEERVVDIVSEQLGVDKDKITRETSFVNDLGADSLDTVELVMELEEEFDISIPDDSAEKIQKVGEAIDFIEKEKGEDA</sequence>